<evidence type="ECO:0000255" key="1">
    <source>
        <dbReference type="HAMAP-Rule" id="MF_01635"/>
    </source>
</evidence>
<comment type="function">
    <text evidence="1">Catalyzes the prenylation of para-hydroxybenzoate (PHB) with an all-trans polyprenyl group. Mediates the second step in the final reaction sequence of ubiquinone-8 (UQ-8) biosynthesis, which is the condensation of the polyisoprenoid side chain with PHB, generating the first membrane-bound Q intermediate 3-octaprenyl-4-hydroxybenzoate.</text>
</comment>
<comment type="catalytic activity">
    <reaction evidence="1">
        <text>all-trans-octaprenyl diphosphate + 4-hydroxybenzoate = 4-hydroxy-3-(all-trans-octaprenyl)benzoate + diphosphate</text>
        <dbReference type="Rhea" id="RHEA:27782"/>
        <dbReference type="ChEBI" id="CHEBI:1617"/>
        <dbReference type="ChEBI" id="CHEBI:17879"/>
        <dbReference type="ChEBI" id="CHEBI:33019"/>
        <dbReference type="ChEBI" id="CHEBI:57711"/>
        <dbReference type="EC" id="2.5.1.39"/>
    </reaction>
</comment>
<comment type="cofactor">
    <cofactor evidence="1">
        <name>Mg(2+)</name>
        <dbReference type="ChEBI" id="CHEBI:18420"/>
    </cofactor>
</comment>
<comment type="pathway">
    <text evidence="1">Cofactor biosynthesis; ubiquinone biosynthesis.</text>
</comment>
<comment type="subcellular location">
    <subcellularLocation>
        <location evidence="1">Cell inner membrane</location>
        <topology evidence="1">Multi-pass membrane protein</topology>
    </subcellularLocation>
</comment>
<comment type="similarity">
    <text evidence="1">Belongs to the UbiA prenyltransferase family.</text>
</comment>
<sequence>MYLSLLKSLNRLHPRAWDFLQLARMDKPIGIYLLLWPTLVALWIAAEGQPSLSHVLIFTFGVVLTRAGGCAINDFADRKVDGQVKRTDQRPLATGKVSAKEALILFAVLMGAAFLLVLCTNATTVWLSFGALALAACYPFMKRYTYYPQVVLGAAYSWGILMTFTAQNGELPATAWLLYIANLLWTVGYDTYYAMTDRDDDLKIGVKSTAILFGDADRVIILTLQGLSLGCLLLAGARFNLGGWFHLGLAVAAACFAWEFWYTRDRDRMKCFKAFLHNHWAGLAIFVGVVLDYALR</sequence>
<keyword id="KW-0997">Cell inner membrane</keyword>
<keyword id="KW-1003">Cell membrane</keyword>
<keyword id="KW-0460">Magnesium</keyword>
<keyword id="KW-0472">Membrane</keyword>
<keyword id="KW-0808">Transferase</keyword>
<keyword id="KW-0812">Transmembrane</keyword>
<keyword id="KW-1133">Transmembrane helix</keyword>
<keyword id="KW-0831">Ubiquinone biosynthesis</keyword>
<reference key="1">
    <citation type="journal article" date="2005" name="Nat. Biotechnol.">
        <title>Complete genome sequence of the plant commensal Pseudomonas fluorescens Pf-5.</title>
        <authorList>
            <person name="Paulsen I.T."/>
            <person name="Press C.M."/>
            <person name="Ravel J."/>
            <person name="Kobayashi D.Y."/>
            <person name="Myers G.S.A."/>
            <person name="Mavrodi D.V."/>
            <person name="DeBoy R.T."/>
            <person name="Seshadri R."/>
            <person name="Ren Q."/>
            <person name="Madupu R."/>
            <person name="Dodson R.J."/>
            <person name="Durkin A.S."/>
            <person name="Brinkac L.M."/>
            <person name="Daugherty S.C."/>
            <person name="Sullivan S.A."/>
            <person name="Rosovitz M.J."/>
            <person name="Gwinn M.L."/>
            <person name="Zhou L."/>
            <person name="Schneider D.J."/>
            <person name="Cartinhour S.W."/>
            <person name="Nelson W.C."/>
            <person name="Weidman J."/>
            <person name="Watkins K."/>
            <person name="Tran K."/>
            <person name="Khouri H."/>
            <person name="Pierson E.A."/>
            <person name="Pierson L.S. III"/>
            <person name="Thomashow L.S."/>
            <person name="Loper J.E."/>
        </authorList>
    </citation>
    <scope>NUCLEOTIDE SEQUENCE [LARGE SCALE GENOMIC DNA]</scope>
    <source>
        <strain>ATCC BAA-477 / NRRL B-23932 / Pf-5</strain>
    </source>
</reference>
<name>UBIA_PSEF5</name>
<proteinExistence type="inferred from homology"/>
<accession>Q4K3L9</accession>
<protein>
    <recommendedName>
        <fullName evidence="1">4-hydroxybenzoate octaprenyltransferase</fullName>
        <ecNumber evidence="1">2.5.1.39</ecNumber>
    </recommendedName>
    <alternativeName>
        <fullName evidence="1">4-HB polyprenyltransferase</fullName>
    </alternativeName>
</protein>
<dbReference type="EC" id="2.5.1.39" evidence="1"/>
<dbReference type="EMBL" id="CP000076">
    <property type="protein sequence ID" value="AAY95294.1"/>
    <property type="molecule type" value="Genomic_DNA"/>
</dbReference>
<dbReference type="RefSeq" id="WP_011064273.1">
    <property type="nucleotide sequence ID" value="NC_004129.6"/>
</dbReference>
<dbReference type="SMR" id="Q4K3L9"/>
<dbReference type="STRING" id="220664.PFL_6106"/>
<dbReference type="GeneID" id="57479065"/>
<dbReference type="KEGG" id="pfl:PFL_6106"/>
<dbReference type="PATRIC" id="fig|220664.5.peg.6233"/>
<dbReference type="eggNOG" id="COG0382">
    <property type="taxonomic scope" value="Bacteria"/>
</dbReference>
<dbReference type="HOGENOM" id="CLU_034879_1_0_6"/>
<dbReference type="UniPathway" id="UPA00232"/>
<dbReference type="Proteomes" id="UP000008540">
    <property type="component" value="Chromosome"/>
</dbReference>
<dbReference type="GO" id="GO:0005886">
    <property type="term" value="C:plasma membrane"/>
    <property type="evidence" value="ECO:0007669"/>
    <property type="project" value="UniProtKB-SubCell"/>
</dbReference>
<dbReference type="GO" id="GO:0008412">
    <property type="term" value="F:4-hydroxybenzoate polyprenyltransferase activity"/>
    <property type="evidence" value="ECO:0007669"/>
    <property type="project" value="UniProtKB-UniRule"/>
</dbReference>
<dbReference type="GO" id="GO:0006744">
    <property type="term" value="P:ubiquinone biosynthetic process"/>
    <property type="evidence" value="ECO:0007669"/>
    <property type="project" value="UniProtKB-UniRule"/>
</dbReference>
<dbReference type="CDD" id="cd13959">
    <property type="entry name" value="PT_UbiA_COQ2"/>
    <property type="match status" value="1"/>
</dbReference>
<dbReference type="FunFam" id="1.10.357.140:FF:000002">
    <property type="entry name" value="4-hydroxybenzoate octaprenyltransferase"/>
    <property type="match status" value="1"/>
</dbReference>
<dbReference type="FunFam" id="1.20.120.1780:FF:000001">
    <property type="entry name" value="4-hydroxybenzoate octaprenyltransferase"/>
    <property type="match status" value="1"/>
</dbReference>
<dbReference type="Gene3D" id="1.10.357.140">
    <property type="entry name" value="UbiA prenyltransferase"/>
    <property type="match status" value="1"/>
</dbReference>
<dbReference type="Gene3D" id="1.20.120.1780">
    <property type="entry name" value="UbiA prenyltransferase"/>
    <property type="match status" value="1"/>
</dbReference>
<dbReference type="HAMAP" id="MF_01635">
    <property type="entry name" value="UbiA"/>
    <property type="match status" value="1"/>
</dbReference>
<dbReference type="InterPro" id="IPR006370">
    <property type="entry name" value="HB_polyprenyltransferase-like"/>
</dbReference>
<dbReference type="InterPro" id="IPR039653">
    <property type="entry name" value="Prenyltransferase"/>
</dbReference>
<dbReference type="InterPro" id="IPR000537">
    <property type="entry name" value="UbiA_prenyltransferase"/>
</dbReference>
<dbReference type="InterPro" id="IPR044878">
    <property type="entry name" value="UbiA_sf"/>
</dbReference>
<dbReference type="NCBIfam" id="TIGR01474">
    <property type="entry name" value="ubiA_proteo"/>
    <property type="match status" value="1"/>
</dbReference>
<dbReference type="PANTHER" id="PTHR11048:SF28">
    <property type="entry name" value="4-HYDROXYBENZOATE POLYPRENYLTRANSFERASE, MITOCHONDRIAL"/>
    <property type="match status" value="1"/>
</dbReference>
<dbReference type="PANTHER" id="PTHR11048">
    <property type="entry name" value="PRENYLTRANSFERASES"/>
    <property type="match status" value="1"/>
</dbReference>
<dbReference type="Pfam" id="PF01040">
    <property type="entry name" value="UbiA"/>
    <property type="match status" value="1"/>
</dbReference>
<organism>
    <name type="scientific">Pseudomonas fluorescens (strain ATCC BAA-477 / NRRL B-23932 / Pf-5)</name>
    <dbReference type="NCBI Taxonomy" id="220664"/>
    <lineage>
        <taxon>Bacteria</taxon>
        <taxon>Pseudomonadati</taxon>
        <taxon>Pseudomonadota</taxon>
        <taxon>Gammaproteobacteria</taxon>
        <taxon>Pseudomonadales</taxon>
        <taxon>Pseudomonadaceae</taxon>
        <taxon>Pseudomonas</taxon>
    </lineage>
</organism>
<feature type="chain" id="PRO_0000262820" description="4-hydroxybenzoate octaprenyltransferase">
    <location>
        <begin position="1"/>
        <end position="296"/>
    </location>
</feature>
<feature type="transmembrane region" description="Helical" evidence="1">
    <location>
        <begin position="28"/>
        <end position="48"/>
    </location>
</feature>
<feature type="transmembrane region" description="Helical" evidence="1">
    <location>
        <begin position="52"/>
        <end position="72"/>
    </location>
</feature>
<feature type="transmembrane region" description="Helical" evidence="1">
    <location>
        <begin position="102"/>
        <end position="122"/>
    </location>
</feature>
<feature type="transmembrane region" description="Helical" evidence="1">
    <location>
        <begin position="146"/>
        <end position="166"/>
    </location>
</feature>
<feature type="transmembrane region" description="Helical" evidence="1">
    <location>
        <begin position="169"/>
        <end position="189"/>
    </location>
</feature>
<feature type="transmembrane region" description="Helical" evidence="1">
    <location>
        <begin position="219"/>
        <end position="239"/>
    </location>
</feature>
<feature type="transmembrane region" description="Helical" evidence="1">
    <location>
        <begin position="241"/>
        <end position="261"/>
    </location>
</feature>
<feature type="transmembrane region" description="Helical" evidence="1">
    <location>
        <begin position="275"/>
        <end position="295"/>
    </location>
</feature>
<gene>
    <name evidence="1" type="primary">ubiA</name>
    <name type="ordered locus">PFL_6106</name>
</gene>